<sequence length="245" mass="26010">MKQVDLNADLAEGCGSDEALLQLITSANIACAQHAGSIADIRAALAYAQQNGVRIGAHPGYPDRENFGRTEMNLSEADLRACLNYQLGALQALCRDQGLEMAYVKPHGAMYNQAAKNRALADTVARIVADFDPKLKLMALSGSLLLEAGKAAGLGVISEVFADRRYMPDGTLVPRSRPDAQVDSDEEAIAQVLQMVRDGRVKAVNGSLVAVQADSICLHGDGPHAVVFAEKIRQELLAAGIKVSA</sequence>
<accession>A9M3F3</accession>
<comment type="function">
    <text evidence="1">Catalyzes the cleavage of 5-oxoproline to form L-glutamate coupled to the hydrolysis of ATP to ADP and inorganic phosphate.</text>
</comment>
<comment type="catalytic activity">
    <reaction evidence="1">
        <text>5-oxo-L-proline + ATP + 2 H2O = L-glutamate + ADP + phosphate + H(+)</text>
        <dbReference type="Rhea" id="RHEA:10348"/>
        <dbReference type="ChEBI" id="CHEBI:15377"/>
        <dbReference type="ChEBI" id="CHEBI:15378"/>
        <dbReference type="ChEBI" id="CHEBI:29985"/>
        <dbReference type="ChEBI" id="CHEBI:30616"/>
        <dbReference type="ChEBI" id="CHEBI:43474"/>
        <dbReference type="ChEBI" id="CHEBI:58402"/>
        <dbReference type="ChEBI" id="CHEBI:456216"/>
        <dbReference type="EC" id="3.5.2.9"/>
    </reaction>
</comment>
<comment type="subunit">
    <text evidence="1">Forms a complex composed of PxpA, PxpB and PxpC.</text>
</comment>
<comment type="similarity">
    <text evidence="1">Belongs to the LamB/PxpA family.</text>
</comment>
<proteinExistence type="inferred from homology"/>
<gene>
    <name evidence="1" type="primary">pxpA</name>
    <name type="ordered locus">NMCC_1916</name>
</gene>
<organism>
    <name type="scientific">Neisseria meningitidis serogroup C (strain 053442)</name>
    <dbReference type="NCBI Taxonomy" id="374833"/>
    <lineage>
        <taxon>Bacteria</taxon>
        <taxon>Pseudomonadati</taxon>
        <taxon>Pseudomonadota</taxon>
        <taxon>Betaproteobacteria</taxon>
        <taxon>Neisseriales</taxon>
        <taxon>Neisseriaceae</taxon>
        <taxon>Neisseria</taxon>
    </lineage>
</organism>
<keyword id="KW-0067">ATP-binding</keyword>
<keyword id="KW-0378">Hydrolase</keyword>
<keyword id="KW-0547">Nucleotide-binding</keyword>
<protein>
    <recommendedName>
        <fullName evidence="1">5-oxoprolinase subunit A</fullName>
        <shortName evidence="1">5-OPase subunit A</shortName>
        <ecNumber evidence="1">3.5.2.9</ecNumber>
    </recommendedName>
    <alternativeName>
        <fullName evidence="1">5-oxoprolinase (ATP-hydrolyzing) subunit A</fullName>
    </alternativeName>
</protein>
<name>PXPA_NEIM0</name>
<dbReference type="EC" id="3.5.2.9" evidence="1"/>
<dbReference type="EMBL" id="CP000381">
    <property type="protein sequence ID" value="ABX74047.1"/>
    <property type="molecule type" value="Genomic_DNA"/>
</dbReference>
<dbReference type="RefSeq" id="WP_002218632.1">
    <property type="nucleotide sequence ID" value="NC_010120.1"/>
</dbReference>
<dbReference type="SMR" id="A9M3F3"/>
<dbReference type="KEGG" id="nmn:NMCC_1916"/>
<dbReference type="HOGENOM" id="CLU_069535_0_0_4"/>
<dbReference type="Proteomes" id="UP000001177">
    <property type="component" value="Chromosome"/>
</dbReference>
<dbReference type="GO" id="GO:0017168">
    <property type="term" value="F:5-oxoprolinase (ATP-hydrolyzing) activity"/>
    <property type="evidence" value="ECO:0007669"/>
    <property type="project" value="UniProtKB-UniRule"/>
</dbReference>
<dbReference type="GO" id="GO:0005524">
    <property type="term" value="F:ATP binding"/>
    <property type="evidence" value="ECO:0007669"/>
    <property type="project" value="UniProtKB-UniRule"/>
</dbReference>
<dbReference type="GO" id="GO:0005975">
    <property type="term" value="P:carbohydrate metabolic process"/>
    <property type="evidence" value="ECO:0007669"/>
    <property type="project" value="InterPro"/>
</dbReference>
<dbReference type="CDD" id="cd10800">
    <property type="entry name" value="LamB_YcsF_YbgL_like"/>
    <property type="match status" value="1"/>
</dbReference>
<dbReference type="Gene3D" id="3.20.20.370">
    <property type="entry name" value="Glycoside hydrolase/deacetylase"/>
    <property type="match status" value="1"/>
</dbReference>
<dbReference type="HAMAP" id="MF_00691">
    <property type="entry name" value="PxpA"/>
    <property type="match status" value="1"/>
</dbReference>
<dbReference type="InterPro" id="IPR011330">
    <property type="entry name" value="Glyco_hydro/deAcase_b/a-brl"/>
</dbReference>
<dbReference type="InterPro" id="IPR005501">
    <property type="entry name" value="LamB/YcsF/PxpA-like"/>
</dbReference>
<dbReference type="NCBIfam" id="NF003814">
    <property type="entry name" value="PRK05406.1-3"/>
    <property type="match status" value="1"/>
</dbReference>
<dbReference type="NCBIfam" id="NF003815">
    <property type="entry name" value="PRK05406.1-4"/>
    <property type="match status" value="1"/>
</dbReference>
<dbReference type="NCBIfam" id="NF003816">
    <property type="entry name" value="PRK05406.1-5"/>
    <property type="match status" value="1"/>
</dbReference>
<dbReference type="PANTHER" id="PTHR30292:SF0">
    <property type="entry name" value="5-OXOPROLINASE SUBUNIT A"/>
    <property type="match status" value="1"/>
</dbReference>
<dbReference type="PANTHER" id="PTHR30292">
    <property type="entry name" value="UNCHARACTERIZED PROTEIN YBGL-RELATED"/>
    <property type="match status" value="1"/>
</dbReference>
<dbReference type="Pfam" id="PF03746">
    <property type="entry name" value="LamB_YcsF"/>
    <property type="match status" value="1"/>
</dbReference>
<dbReference type="SUPFAM" id="SSF88713">
    <property type="entry name" value="Glycoside hydrolase/deacetylase"/>
    <property type="match status" value="1"/>
</dbReference>
<reference key="1">
    <citation type="journal article" date="2008" name="Genomics">
        <title>Characterization of ST-4821 complex, a unique Neisseria meningitidis clone.</title>
        <authorList>
            <person name="Peng J."/>
            <person name="Yang L."/>
            <person name="Yang F."/>
            <person name="Yang J."/>
            <person name="Yan Y."/>
            <person name="Nie H."/>
            <person name="Zhang X."/>
            <person name="Xiong Z."/>
            <person name="Jiang Y."/>
            <person name="Cheng F."/>
            <person name="Xu X."/>
            <person name="Chen S."/>
            <person name="Sun L."/>
            <person name="Li W."/>
            <person name="Shen Y."/>
            <person name="Shao Z."/>
            <person name="Liang X."/>
            <person name="Xu J."/>
            <person name="Jin Q."/>
        </authorList>
    </citation>
    <scope>NUCLEOTIDE SEQUENCE [LARGE SCALE GENOMIC DNA]</scope>
    <source>
        <strain>053442</strain>
    </source>
</reference>
<evidence type="ECO:0000255" key="1">
    <source>
        <dbReference type="HAMAP-Rule" id="MF_00691"/>
    </source>
</evidence>
<feature type="chain" id="PRO_1000083122" description="5-oxoprolinase subunit A">
    <location>
        <begin position="1"/>
        <end position="245"/>
    </location>
</feature>